<dbReference type="EMBL" id="BC113256">
    <property type="protein sequence ID" value="AAI13257.1"/>
    <property type="molecule type" value="mRNA"/>
</dbReference>
<dbReference type="RefSeq" id="NP_001039815.1">
    <property type="nucleotide sequence ID" value="NM_001046350.1"/>
</dbReference>
<dbReference type="RefSeq" id="XP_024845908.1">
    <property type="nucleotide sequence ID" value="XM_024990140.2"/>
</dbReference>
<dbReference type="RefSeq" id="XP_024845910.1">
    <property type="nucleotide sequence ID" value="XM_024990142.2"/>
</dbReference>
<dbReference type="RefSeq" id="XP_059741170.1">
    <property type="nucleotide sequence ID" value="XM_059885187.1"/>
</dbReference>
<dbReference type="SMR" id="Q2HJ84"/>
<dbReference type="FunCoup" id="Q2HJ84">
    <property type="interactions" value="3009"/>
</dbReference>
<dbReference type="STRING" id="9913.ENSBTAP00000018809"/>
<dbReference type="PaxDb" id="9913-ENSBTAP00000018809"/>
<dbReference type="Ensembl" id="ENSBTAT00000018809.7">
    <property type="protein sequence ID" value="ENSBTAP00000018809.5"/>
    <property type="gene ID" value="ENSBTAG00000014153.7"/>
</dbReference>
<dbReference type="GeneID" id="533382"/>
<dbReference type="KEGG" id="bta:533382"/>
<dbReference type="CTD" id="5316"/>
<dbReference type="VEuPathDB" id="HostDB:ENSBTAG00000014153"/>
<dbReference type="VGNC" id="VGNC:32948">
    <property type="gene designation" value="PKNOX1"/>
</dbReference>
<dbReference type="eggNOG" id="KOG0773">
    <property type="taxonomic scope" value="Eukaryota"/>
</dbReference>
<dbReference type="GeneTree" id="ENSGT00940000159505"/>
<dbReference type="HOGENOM" id="CLU_023139_0_2_1"/>
<dbReference type="InParanoid" id="Q2HJ84"/>
<dbReference type="OMA" id="QHVTMPD"/>
<dbReference type="OrthoDB" id="10056939at2759"/>
<dbReference type="TreeFam" id="TF318093"/>
<dbReference type="Proteomes" id="UP000009136">
    <property type="component" value="Chromosome 1"/>
</dbReference>
<dbReference type="Bgee" id="ENSBTAG00000014153">
    <property type="expression patterns" value="Expressed in spermatid and 105 other cell types or tissues"/>
</dbReference>
<dbReference type="GO" id="GO:0005737">
    <property type="term" value="C:cytoplasm"/>
    <property type="evidence" value="ECO:0007669"/>
    <property type="project" value="Ensembl"/>
</dbReference>
<dbReference type="GO" id="GO:0005634">
    <property type="term" value="C:nucleus"/>
    <property type="evidence" value="ECO:0007669"/>
    <property type="project" value="UniProtKB-SubCell"/>
</dbReference>
<dbReference type="GO" id="GO:0005667">
    <property type="term" value="C:transcription regulator complex"/>
    <property type="evidence" value="ECO:0007669"/>
    <property type="project" value="Ensembl"/>
</dbReference>
<dbReference type="GO" id="GO:0003682">
    <property type="term" value="F:chromatin binding"/>
    <property type="evidence" value="ECO:0007669"/>
    <property type="project" value="Ensembl"/>
</dbReference>
<dbReference type="GO" id="GO:0000981">
    <property type="term" value="F:DNA-binding transcription factor activity, RNA polymerase II-specific"/>
    <property type="evidence" value="ECO:0007669"/>
    <property type="project" value="Ensembl"/>
</dbReference>
<dbReference type="GO" id="GO:0000978">
    <property type="term" value="F:RNA polymerase II cis-regulatory region sequence-specific DNA binding"/>
    <property type="evidence" value="ECO:0007669"/>
    <property type="project" value="Ensembl"/>
</dbReference>
<dbReference type="GO" id="GO:0001525">
    <property type="term" value="P:angiogenesis"/>
    <property type="evidence" value="ECO:0000318"/>
    <property type="project" value="GO_Central"/>
</dbReference>
<dbReference type="GO" id="GO:0043010">
    <property type="term" value="P:camera-type eye development"/>
    <property type="evidence" value="ECO:0007669"/>
    <property type="project" value="Ensembl"/>
</dbReference>
<dbReference type="GO" id="GO:0030218">
    <property type="term" value="P:erythrocyte differentiation"/>
    <property type="evidence" value="ECO:0007669"/>
    <property type="project" value="Ensembl"/>
</dbReference>
<dbReference type="GO" id="GO:0045944">
    <property type="term" value="P:positive regulation of transcription by RNA polymerase II"/>
    <property type="evidence" value="ECO:0007669"/>
    <property type="project" value="Ensembl"/>
</dbReference>
<dbReference type="GO" id="GO:0030217">
    <property type="term" value="P:T cell differentiation"/>
    <property type="evidence" value="ECO:0007669"/>
    <property type="project" value="Ensembl"/>
</dbReference>
<dbReference type="CDD" id="cd00086">
    <property type="entry name" value="homeodomain"/>
    <property type="match status" value="1"/>
</dbReference>
<dbReference type="FunFam" id="1.10.10.60:FF:000004">
    <property type="entry name" value="Meis2 homeobox isoform 2c"/>
    <property type="match status" value="1"/>
</dbReference>
<dbReference type="Gene3D" id="1.10.10.60">
    <property type="entry name" value="Homeodomain-like"/>
    <property type="match status" value="1"/>
</dbReference>
<dbReference type="InterPro" id="IPR001356">
    <property type="entry name" value="HD"/>
</dbReference>
<dbReference type="InterPro" id="IPR009057">
    <property type="entry name" value="Homeodomain-like_sf"/>
</dbReference>
<dbReference type="InterPro" id="IPR008422">
    <property type="entry name" value="KN_HD"/>
</dbReference>
<dbReference type="InterPro" id="IPR032453">
    <property type="entry name" value="PKNOX/Meis_N"/>
</dbReference>
<dbReference type="InterPro" id="IPR050224">
    <property type="entry name" value="TALE_homeobox"/>
</dbReference>
<dbReference type="PANTHER" id="PTHR11850">
    <property type="entry name" value="HOMEOBOX PROTEIN TRANSCRIPTION FACTORS"/>
    <property type="match status" value="1"/>
</dbReference>
<dbReference type="Pfam" id="PF05920">
    <property type="entry name" value="Homeobox_KN"/>
    <property type="match status" value="1"/>
</dbReference>
<dbReference type="Pfam" id="PF16493">
    <property type="entry name" value="Meis_PKNOX_N"/>
    <property type="match status" value="1"/>
</dbReference>
<dbReference type="SMART" id="SM00389">
    <property type="entry name" value="HOX"/>
    <property type="match status" value="1"/>
</dbReference>
<dbReference type="SUPFAM" id="SSF46689">
    <property type="entry name" value="Homeodomain-like"/>
    <property type="match status" value="1"/>
</dbReference>
<dbReference type="PROSITE" id="PS50071">
    <property type="entry name" value="HOMEOBOX_2"/>
    <property type="match status" value="1"/>
</dbReference>
<protein>
    <recommendedName>
        <fullName>Homeobox protein PKNOX1</fullName>
    </recommendedName>
    <alternativeName>
        <fullName>PBX/knotted homeobox 1</fullName>
    </alternativeName>
</protein>
<gene>
    <name evidence="2" type="primary">PKNOX1</name>
    <name evidence="2" type="synonym">PREP1</name>
</gene>
<name>PKNX1_BOVIN</name>
<accession>Q2HJ84</accession>
<proteinExistence type="evidence at transcript level"/>
<keyword id="KW-0010">Activator</keyword>
<keyword id="KW-0238">DNA-binding</keyword>
<keyword id="KW-0371">Homeobox</keyword>
<keyword id="KW-0539">Nucleus</keyword>
<keyword id="KW-0597">Phosphoprotein</keyword>
<keyword id="KW-1185">Reference proteome</keyword>
<keyword id="KW-0804">Transcription</keyword>
<keyword id="KW-0805">Transcription regulation</keyword>
<evidence type="ECO:0000250" key="1">
    <source>
        <dbReference type="UniProtKB" id="O70477"/>
    </source>
</evidence>
<evidence type="ECO:0000250" key="2">
    <source>
        <dbReference type="UniProtKB" id="P55347"/>
    </source>
</evidence>
<evidence type="ECO:0000255" key="3"/>
<evidence type="ECO:0000255" key="4">
    <source>
        <dbReference type="PROSITE-ProRule" id="PRU00108"/>
    </source>
</evidence>
<evidence type="ECO:0000256" key="5">
    <source>
        <dbReference type="SAM" id="MobiDB-lite"/>
    </source>
</evidence>
<evidence type="ECO:0000305" key="6"/>
<reference key="1">
    <citation type="submission" date="2006-02" db="EMBL/GenBank/DDBJ databases">
        <authorList>
            <consortium name="NIH - Mammalian Gene Collection (MGC) project"/>
        </authorList>
    </citation>
    <scope>NUCLEOTIDE SEQUENCE [LARGE SCALE MRNA]</scope>
    <source>
        <strain>Hereford</strain>
        <tissue>Uterus</tissue>
    </source>
</reference>
<comment type="function">
    <text evidence="1">Activates transcription in the presence of PBX1A and HOXA1.</text>
</comment>
<comment type="subunit">
    <text evidence="2">Interacts with MN1.</text>
</comment>
<comment type="subcellular location">
    <subcellularLocation>
        <location evidence="6">Nucleus</location>
    </subcellularLocation>
</comment>
<comment type="similarity">
    <text evidence="6">Belongs to the TALE/MEIS homeobox family.</text>
</comment>
<organism>
    <name type="scientific">Bos taurus</name>
    <name type="common">Bovine</name>
    <dbReference type="NCBI Taxonomy" id="9913"/>
    <lineage>
        <taxon>Eukaryota</taxon>
        <taxon>Metazoa</taxon>
        <taxon>Chordata</taxon>
        <taxon>Craniata</taxon>
        <taxon>Vertebrata</taxon>
        <taxon>Euteleostomi</taxon>
        <taxon>Mammalia</taxon>
        <taxon>Eutheria</taxon>
        <taxon>Laurasiatheria</taxon>
        <taxon>Artiodactyla</taxon>
        <taxon>Ruminantia</taxon>
        <taxon>Pecora</taxon>
        <taxon>Bovidae</taxon>
        <taxon>Bovinae</taxon>
        <taxon>Bos</taxon>
    </lineage>
</organism>
<sequence length="436" mass="47204">MMATQTLSIDSYPDGQQMQVVTELKTEQDPNCSEPDVEGVSPPPVGSQTPMDADKQAIYRHPLFPLLALLFEKCEQSTQGSEGTTSASFDVDIENFVRKQEKEGKPFFCEDPETDNLMVKAIQVLRIHLLELEKVNELCKDFCSRYIACLKTKMNSETLLSGEPGSPYSPVQSQQIQSAITGTLSPQGIVVPASALQQGNVTMATVAGGTVYQPVTVVTPQGQVVTQALSPGTIRIQNSQLQLQLNQDLSILHQDDGSSKNKRGVLPKHATNVMRSWLFQHIGHPYPTEDEKKQIAAQTNLTLLQVNNWFINARRRILQPMLDSSCSETPKTKKKTAQNRPVQRFWPDSIASGAAQPAASELTVSEGAVVTITAPVSMNVDSLQSLSSDGATLAVQQVMMAEQSEDDSVDSTGDGGAALAPGHLGGLVLENSDSLQ</sequence>
<feature type="chain" id="PRO_0000249878" description="Homeobox protein PKNOX1">
    <location>
        <begin position="1"/>
        <end position="436"/>
    </location>
</feature>
<feature type="domain" description="MEIS N-terminal" evidence="3">
    <location>
        <begin position="80"/>
        <end position="163"/>
    </location>
</feature>
<feature type="DNA-binding region" description="Homeobox; TALE-type" evidence="4">
    <location>
        <begin position="259"/>
        <end position="321"/>
    </location>
</feature>
<feature type="region of interest" description="Disordered" evidence="5">
    <location>
        <begin position="24"/>
        <end position="49"/>
    </location>
</feature>
<feature type="region of interest" description="Disordered" evidence="5">
    <location>
        <begin position="401"/>
        <end position="436"/>
    </location>
</feature>
<feature type="modified residue" description="Phosphoserine" evidence="1">
    <location>
        <position position="33"/>
    </location>
</feature>
<feature type="modified residue" description="Phosphoserine" evidence="2">
    <location>
        <position position="41"/>
    </location>
</feature>